<protein>
    <recommendedName>
        <fullName evidence="1">Protein VP3</fullName>
    </recommendedName>
    <domain>
        <recommendedName>
            <fullName evidence="1">2',5'-phosphodiesterase</fullName>
            <ecNumber evidence="1">3.1.4.-</ecNumber>
        </recommendedName>
    </domain>
    <domain>
        <recommendedName>
            <fullName evidence="1">mRNA guanylyltransferase</fullName>
            <ecNumber evidence="1">2.7.7.50</ecNumber>
        </recommendedName>
    </domain>
    <domain>
        <recommendedName>
            <fullName evidence="1">mRNA (guanine-N(7))-methyltransferase</fullName>
            <ecNumber evidence="1">2.1.1.56</ecNumber>
        </recommendedName>
    </domain>
</protein>
<feature type="chain" id="PRO_0000368081" description="Protein VP3">
    <location>
        <begin position="1"/>
        <end position="835"/>
    </location>
</feature>
<feature type="region of interest" description="N7-methyltransferase activity" evidence="1">
    <location>
        <begin position="171"/>
        <end position="245"/>
    </location>
</feature>
<feature type="region of interest" description="2'-O-methyltransferase activity" evidence="1">
    <location>
        <begin position="246"/>
        <end position="428"/>
    </location>
</feature>
<feature type="region of interest" description="N7-methyltransferase activity" evidence="1">
    <location>
        <begin position="429"/>
        <end position="555"/>
    </location>
</feature>
<feature type="region of interest" description="GTase/RTPase activity" evidence="1">
    <location>
        <begin position="556"/>
        <end position="692"/>
    </location>
</feature>
<feature type="region of interest" description="2'-5'-phosphodiesterase activity" evidence="1">
    <location>
        <begin position="693"/>
        <end position="835"/>
    </location>
</feature>
<feature type="active site" description="For 2'-5'-phosphodiesterase activity" evidence="1">
    <location>
        <position position="718"/>
    </location>
</feature>
<feature type="active site" description="For 2'-5'-phosphodiesterase activity" evidence="1">
    <location>
        <position position="720"/>
    </location>
</feature>
<feature type="active site" description="For 2'-5'-phosphodiesterase activity" evidence="1">
    <location>
        <position position="797"/>
    </location>
</feature>
<feature type="active site" description="For 2'-5'-phosphodiesterase activity" evidence="1">
    <location>
        <position position="799"/>
    </location>
</feature>
<proteinExistence type="inferred from homology"/>
<name>VP3_ROTYO</name>
<comment type="function">
    <text evidence="1">Multifunctional enzyme involved in mRNA capping. Catalyzes the formation of the 5' cap structure on the viral plus-strand transcripts. Specifically binds to GTP and displays guanylyltransferase and methyltransferase activities. Has affinity for ssRNA but not for dsRNA. Capping activity is non-specific and caps RNAs that initiate with either a G or an A residue. Together with VP1 polymerase, forms a VP1-VP3 complex positioned near the channels situated at each of the five-fold vertices of the core. Following infection, the outermost layer of the virus is lost, leaving a double-layered particle (DLP) made up of the core and VP6 shell. VP1 then catalyzes the transcription of fully conservative plus-strand genomic RNAs that are capped by VP3 and extruded through the DLP's channels into the cytoplasm where they function as mRNAs for translation of viral proteins. DLPs probably have an RNA triphosphatase activity as well, whereas open cores do not.</text>
</comment>
<comment type="function">
    <text evidence="1">Counteracts the host innate immune response thanks to its phosphodiesterase that degrades the 5'-triphosphorylated, 2'-5' linked adenylate oligomers produced by the host cell IFN-inducible 2',5'-oligoadenylate synthetase (OAS). The host RNaseL is therefore not activated.</text>
</comment>
<comment type="catalytic activity">
    <reaction evidence="1">
        <text>a 5'-end diphospho-ribonucleoside in mRNA + GTP + H(+) = a 5'-end (5'-triphosphoguanosine)-ribonucleoside in mRNA + diphosphate</text>
        <dbReference type="Rhea" id="RHEA:67012"/>
        <dbReference type="Rhea" id="RHEA-COMP:17165"/>
        <dbReference type="Rhea" id="RHEA-COMP:17166"/>
        <dbReference type="ChEBI" id="CHEBI:15378"/>
        <dbReference type="ChEBI" id="CHEBI:33019"/>
        <dbReference type="ChEBI" id="CHEBI:37565"/>
        <dbReference type="ChEBI" id="CHEBI:167616"/>
        <dbReference type="ChEBI" id="CHEBI:167617"/>
        <dbReference type="EC" id="2.7.7.50"/>
    </reaction>
</comment>
<comment type="catalytic activity">
    <reaction evidence="1">
        <text>a 5'-end (5'-triphosphoguanosine)-ribonucleoside in mRNA + S-adenosyl-L-methionine = a 5'-end (N(7)-methyl 5'-triphosphoguanosine)-ribonucleoside in mRNA + S-adenosyl-L-homocysteine</text>
        <dbReference type="Rhea" id="RHEA:67008"/>
        <dbReference type="Rhea" id="RHEA-COMP:17166"/>
        <dbReference type="Rhea" id="RHEA-COMP:17167"/>
        <dbReference type="ChEBI" id="CHEBI:57856"/>
        <dbReference type="ChEBI" id="CHEBI:59789"/>
        <dbReference type="ChEBI" id="CHEBI:156461"/>
        <dbReference type="ChEBI" id="CHEBI:167617"/>
        <dbReference type="EC" id="2.1.1.56"/>
    </reaction>
</comment>
<comment type="catalytic activity">
    <reaction evidence="1">
        <text>5'-triphosphoadenylyl-(2'-&gt;5')-adenylyl-(2'-&gt;5')-adenosine + 2 H2O = 2 AMP + ATP + 2 H(+)</text>
        <dbReference type="Rhea" id="RHEA:45964"/>
        <dbReference type="ChEBI" id="CHEBI:15377"/>
        <dbReference type="ChEBI" id="CHEBI:15378"/>
        <dbReference type="ChEBI" id="CHEBI:30616"/>
        <dbReference type="ChEBI" id="CHEBI:67143"/>
        <dbReference type="ChEBI" id="CHEBI:456215"/>
    </reaction>
</comment>
<comment type="subunit">
    <text evidence="1">Interacts with VP1. Interacts with VP2.</text>
</comment>
<comment type="subcellular location">
    <subcellularLocation>
        <location evidence="1">Virion</location>
    </subcellularLocation>
    <text evidence="1">Attached inside the inner capsid as a minor component. There are about 11 to 12 copies per virion.</text>
</comment>
<comment type="domain">
    <text evidence="1">Contains a bipartite N7-methyltransferase domain, a 2'-O-methyltransferase domain and a GTase/RTPase domain. The C-terminus contains a phosphodiesterase domain that degrades the 5'-triphosphorylated, 2'-5' linked adenylate oligomers produced by the host cell in response to IFN stimulation.</text>
</comment>
<comment type="similarity">
    <text evidence="1">Belongs to the rotavirus VP3 family.</text>
</comment>
<keyword id="KW-0342">GTP-binding</keyword>
<keyword id="KW-0945">Host-virus interaction</keyword>
<keyword id="KW-0378">Hydrolase</keyword>
<keyword id="KW-1090">Inhibition of host innate immune response by virus</keyword>
<keyword id="KW-0489">Methyltransferase</keyword>
<keyword id="KW-0506">mRNA capping</keyword>
<keyword id="KW-0507">mRNA processing</keyword>
<keyword id="KW-0511">Multifunctional enzyme</keyword>
<keyword id="KW-0547">Nucleotide-binding</keyword>
<keyword id="KW-0548">Nucleotidyltransferase</keyword>
<keyword id="KW-0694">RNA-binding</keyword>
<keyword id="KW-0949">S-adenosyl-L-methionine</keyword>
<keyword id="KW-0808">Transferase</keyword>
<keyword id="KW-0899">Viral immunoevasion</keyword>
<keyword id="KW-0946">Virion</keyword>
<dbReference type="EC" id="3.1.4.-" evidence="1"/>
<dbReference type="EC" id="2.7.7.50" evidence="1"/>
<dbReference type="EC" id="2.1.1.56" evidence="1"/>
<dbReference type="EMBL" id="DQ870499">
    <property type="protein sequence ID" value="ABI60854.1"/>
    <property type="molecule type" value="Genomic_RNA"/>
</dbReference>
<dbReference type="SMR" id="A7J3A4"/>
<dbReference type="GO" id="GO:0019013">
    <property type="term" value="C:viral nucleocapsid"/>
    <property type="evidence" value="ECO:0007669"/>
    <property type="project" value="UniProtKB-UniRule"/>
</dbReference>
<dbReference type="GO" id="GO:0005525">
    <property type="term" value="F:GTP binding"/>
    <property type="evidence" value="ECO:0007669"/>
    <property type="project" value="UniProtKB-UniRule"/>
</dbReference>
<dbReference type="GO" id="GO:0016787">
    <property type="term" value="F:hydrolase activity"/>
    <property type="evidence" value="ECO:0007669"/>
    <property type="project" value="UniProtKB-KW"/>
</dbReference>
<dbReference type="GO" id="GO:0004482">
    <property type="term" value="F:mRNA 5'-cap (guanine-N7-)-methyltransferase activity"/>
    <property type="evidence" value="ECO:0007669"/>
    <property type="project" value="UniProtKB-UniRule"/>
</dbReference>
<dbReference type="GO" id="GO:0004484">
    <property type="term" value="F:mRNA guanylyltransferase activity"/>
    <property type="evidence" value="ECO:0007669"/>
    <property type="project" value="UniProtKB-UniRule"/>
</dbReference>
<dbReference type="GO" id="GO:0003723">
    <property type="term" value="F:RNA binding"/>
    <property type="evidence" value="ECO:0007669"/>
    <property type="project" value="UniProtKB-UniRule"/>
</dbReference>
<dbReference type="GO" id="GO:0052170">
    <property type="term" value="P:symbiont-mediated suppression of host innate immune response"/>
    <property type="evidence" value="ECO:0007669"/>
    <property type="project" value="UniProtKB-KW"/>
</dbReference>
<dbReference type="GO" id="GO:0016032">
    <property type="term" value="P:viral process"/>
    <property type="evidence" value="ECO:0007669"/>
    <property type="project" value="UniProtKB-UniRule"/>
</dbReference>
<dbReference type="CDD" id="cd20757">
    <property type="entry name" value="capping_2-OMTase_Rotavirus"/>
    <property type="match status" value="1"/>
</dbReference>
<dbReference type="HAMAP" id="MF_04124">
    <property type="entry name" value="Rota_VP3"/>
    <property type="match status" value="1"/>
</dbReference>
<dbReference type="HAMAP" id="MF_04128">
    <property type="entry name" value="Rota_VP3_A"/>
    <property type="match status" value="1"/>
</dbReference>
<dbReference type="InterPro" id="IPR011181">
    <property type="entry name" value="VP3_Rotav"/>
</dbReference>
<dbReference type="Pfam" id="PF06929">
    <property type="entry name" value="Rotavirus_VP3"/>
    <property type="match status" value="1"/>
</dbReference>
<dbReference type="PIRSF" id="PIRSF004015">
    <property type="entry name" value="LigT_rotavirus"/>
    <property type="match status" value="1"/>
</dbReference>
<dbReference type="PROSITE" id="PS51589">
    <property type="entry name" value="SAM_MT56_VP3"/>
    <property type="match status" value="1"/>
</dbReference>
<organismHost>
    <name type="scientific">Homo sapiens</name>
    <name type="common">Human</name>
    <dbReference type="NCBI Taxonomy" id="9606"/>
</organismHost>
<sequence>MKVLALRHSVAQVYADTQTYIHDDSKDEYENAFLISNLTTHNILYLNYSFKTLKILNKSGIAAIEVQSPDELFALIRCNFTYDYENNIVYLHDYSYYTNNEIRTDQYWITKTDIINYLLPGWKLTHVGYNGKNTRGHYNFSFICQNAATDDDIIIEYIYSNELDFQNFLLRKIKERMTTSLPIARLSNRVFRDKLFPSIVNIHKKVINVGPRNESMFTFLNFPTIKQFSNGAYIVKHTIKLKQEKWLGKRISQFDIGQYKNMLNVVTTIYYYYNLYYSKPVIYMLGSAPSYWIYDIKQYSDFTFETWDPLDTPYSTIHHKELFFDKDINKLKDNSVLYIDIRTDRGNMDWKEWRKIVEQQTVNNLNIAYKYLSTGKAKVCCVKLTAMDLELPITAKLLHHPTTEIRSEFYAILDVWDIITIKRFIPKGVFYAFINNVTTENVFIQPPFKLKMSPTDYIVALYALSNDFNSRQDIINLINKQKQSLITVRINNTFKDEPKVSFKNIYDWTFLPTDFELKDSVITSYDGCLGMFGLSISLSPKPTGNNHLFIINGTDKYYKLDQYANHTGISRRSHQIRFSESATSYSGYIFRDLSNNNFNLIGTNVENSVSGHVYNALIYYRYNYAFDLKRWIYLHSIGKVAVEGGRYYEHAPIELIYACRSAKEFAILQDDLTVLRYANEIERYINKVYSITYADDPNYFIGIKFNSIPYEYDVKVPHLTLGVLFISDNMVHNVITVLKKMKTELFKMEISTSYTYMLSDNTYVANVSGVLSTYFKLYNMFYRNHVTFGQSRMFIPHITLSFSNKQTVRIESTKLRINSIYLRKIKGETVFDMSE</sequence>
<organism>
    <name type="scientific">Rotavirus A (strain RVA/Human/Japan/YO/1977/G3P1A[8])</name>
    <name type="common">RV-A</name>
    <dbReference type="NCBI Taxonomy" id="578832"/>
    <lineage>
        <taxon>Viruses</taxon>
        <taxon>Riboviria</taxon>
        <taxon>Orthornavirae</taxon>
        <taxon>Duplornaviricota</taxon>
        <taxon>Resentoviricetes</taxon>
        <taxon>Reovirales</taxon>
        <taxon>Sedoreoviridae</taxon>
        <taxon>Rotavirus</taxon>
        <taxon>Rotavirus A</taxon>
    </lineage>
</organism>
<accession>A7J3A4</accession>
<evidence type="ECO:0000255" key="1">
    <source>
        <dbReference type="HAMAP-Rule" id="MF_04128"/>
    </source>
</evidence>
<reference key="1">
    <citation type="journal article" date="2008" name="J. Virol.">
        <title>Full genome-based classification of rotaviruses reveals a common origin between human Wa-Like and porcine rotavirus strains and human DS-1-like and bovine rotavirus strains.</title>
        <authorList>
            <person name="Matthijnssens J."/>
            <person name="Ciarlet M."/>
            <person name="Heiman E.M."/>
            <person name="Arijs I."/>
            <person name="Delbeke T."/>
            <person name="McDonald S.M."/>
            <person name="Palombo E.A."/>
            <person name="Iturriza-Gomara M."/>
            <person name="Maes P."/>
            <person name="Patton J.T."/>
            <person name="Rahman M."/>
            <person name="Van Ranst M."/>
        </authorList>
    </citation>
    <scope>NUCLEOTIDE SEQUENCE [GENOMIC RNA]</scope>
</reference>